<evidence type="ECO:0000250" key="1">
    <source>
        <dbReference type="UniProtKB" id="P9WKG7"/>
    </source>
</evidence>
<evidence type="ECO:0000255" key="2">
    <source>
        <dbReference type="HAMAP-Rule" id="MF_00061"/>
    </source>
</evidence>
<gene>
    <name evidence="2" type="primary">ispE</name>
    <name type="ordered locus">JTY_1040</name>
</gene>
<feature type="chain" id="PRO_1000190693" description="4-diphosphocytidyl-2-C-methyl-D-erythritol kinase">
    <location>
        <begin position="1"/>
        <end position="318"/>
    </location>
</feature>
<feature type="active site" evidence="2">
    <location>
        <position position="25"/>
    </location>
</feature>
<feature type="active site" evidence="2">
    <location>
        <position position="152"/>
    </location>
</feature>
<feature type="binding site" evidence="2">
    <location>
        <begin position="110"/>
        <end position="120"/>
    </location>
    <ligand>
        <name>ATP</name>
        <dbReference type="ChEBI" id="CHEBI:30616"/>
    </ligand>
</feature>
<keyword id="KW-0067">ATP-binding</keyword>
<keyword id="KW-0414">Isoprene biosynthesis</keyword>
<keyword id="KW-0418">Kinase</keyword>
<keyword id="KW-0547">Nucleotide-binding</keyword>
<keyword id="KW-0808">Transferase</keyword>
<dbReference type="EC" id="2.7.1.148" evidence="2"/>
<dbReference type="EMBL" id="AP010918">
    <property type="protein sequence ID" value="BAH25331.1"/>
    <property type="status" value="ALT_INIT"/>
    <property type="molecule type" value="Genomic_DNA"/>
</dbReference>
<dbReference type="RefSeq" id="WP_003898690.1">
    <property type="nucleotide sequence ID" value="NZ_CP014566.1"/>
</dbReference>
<dbReference type="SMR" id="C1AM02"/>
<dbReference type="KEGG" id="mbt:JTY_1040"/>
<dbReference type="HOGENOM" id="CLU_053057_1_1_11"/>
<dbReference type="UniPathway" id="UPA00056">
    <property type="reaction ID" value="UER00094"/>
</dbReference>
<dbReference type="GO" id="GO:0050515">
    <property type="term" value="F:4-(cytidine 5'-diphospho)-2-C-methyl-D-erythritol kinase activity"/>
    <property type="evidence" value="ECO:0007669"/>
    <property type="project" value="UniProtKB-UniRule"/>
</dbReference>
<dbReference type="GO" id="GO:0005524">
    <property type="term" value="F:ATP binding"/>
    <property type="evidence" value="ECO:0007669"/>
    <property type="project" value="UniProtKB-UniRule"/>
</dbReference>
<dbReference type="GO" id="GO:0019288">
    <property type="term" value="P:isopentenyl diphosphate biosynthetic process, methylerythritol 4-phosphate pathway"/>
    <property type="evidence" value="ECO:0007669"/>
    <property type="project" value="UniProtKB-UniRule"/>
</dbReference>
<dbReference type="GO" id="GO:0016114">
    <property type="term" value="P:terpenoid biosynthetic process"/>
    <property type="evidence" value="ECO:0007669"/>
    <property type="project" value="InterPro"/>
</dbReference>
<dbReference type="FunFam" id="3.30.230.10:FF:000076">
    <property type="entry name" value="4-diphosphocytidyl-2-C-methyl-D-erythritol kinase"/>
    <property type="match status" value="1"/>
</dbReference>
<dbReference type="FunFam" id="3.30.70.890:FF:000013">
    <property type="entry name" value="4-diphosphocytidyl-2-C-methyl-D-erythritol kinase"/>
    <property type="match status" value="1"/>
</dbReference>
<dbReference type="Gene3D" id="3.30.230.10">
    <property type="match status" value="1"/>
</dbReference>
<dbReference type="Gene3D" id="3.30.70.890">
    <property type="entry name" value="GHMP kinase, C-terminal domain"/>
    <property type="match status" value="1"/>
</dbReference>
<dbReference type="HAMAP" id="MF_00061">
    <property type="entry name" value="IspE"/>
    <property type="match status" value="1"/>
</dbReference>
<dbReference type="InterPro" id="IPR013750">
    <property type="entry name" value="GHMP_kinase_C_dom"/>
</dbReference>
<dbReference type="InterPro" id="IPR036554">
    <property type="entry name" value="GHMP_kinase_C_sf"/>
</dbReference>
<dbReference type="InterPro" id="IPR006204">
    <property type="entry name" value="GHMP_kinase_N_dom"/>
</dbReference>
<dbReference type="InterPro" id="IPR004424">
    <property type="entry name" value="IspE"/>
</dbReference>
<dbReference type="InterPro" id="IPR020568">
    <property type="entry name" value="Ribosomal_Su5_D2-typ_SF"/>
</dbReference>
<dbReference type="InterPro" id="IPR014721">
    <property type="entry name" value="Ribsml_uS5_D2-typ_fold_subgr"/>
</dbReference>
<dbReference type="NCBIfam" id="TIGR00154">
    <property type="entry name" value="ispE"/>
    <property type="match status" value="1"/>
</dbReference>
<dbReference type="NCBIfam" id="NF002870">
    <property type="entry name" value="PRK03188.1"/>
    <property type="match status" value="1"/>
</dbReference>
<dbReference type="PANTHER" id="PTHR43527">
    <property type="entry name" value="4-DIPHOSPHOCYTIDYL-2-C-METHYL-D-ERYTHRITOL KINASE, CHLOROPLASTIC"/>
    <property type="match status" value="1"/>
</dbReference>
<dbReference type="PANTHER" id="PTHR43527:SF2">
    <property type="entry name" value="4-DIPHOSPHOCYTIDYL-2-C-METHYL-D-ERYTHRITOL KINASE, CHLOROPLASTIC"/>
    <property type="match status" value="1"/>
</dbReference>
<dbReference type="Pfam" id="PF08544">
    <property type="entry name" value="GHMP_kinases_C"/>
    <property type="match status" value="1"/>
</dbReference>
<dbReference type="Pfam" id="PF00288">
    <property type="entry name" value="GHMP_kinases_N"/>
    <property type="match status" value="1"/>
</dbReference>
<dbReference type="PIRSF" id="PIRSF010376">
    <property type="entry name" value="IspE"/>
    <property type="match status" value="1"/>
</dbReference>
<dbReference type="SUPFAM" id="SSF55060">
    <property type="entry name" value="GHMP Kinase, C-terminal domain"/>
    <property type="match status" value="1"/>
</dbReference>
<dbReference type="SUPFAM" id="SSF54211">
    <property type="entry name" value="Ribosomal protein S5 domain 2-like"/>
    <property type="match status" value="1"/>
</dbReference>
<proteinExistence type="inferred from homology"/>
<name>ISPE_MYCBT</name>
<protein>
    <recommendedName>
        <fullName evidence="2">4-diphosphocytidyl-2-C-methyl-D-erythritol kinase</fullName>
        <shortName evidence="2">CMK</shortName>
        <ecNumber evidence="2">2.7.1.148</ecNumber>
    </recommendedName>
    <alternativeName>
        <fullName evidence="2">4-(cytidine-5'-diphospho)-2-C-methyl-D-erythritol kinase</fullName>
    </alternativeName>
</protein>
<organism>
    <name type="scientific">Mycobacterium bovis (strain BCG / Tokyo 172 / ATCC 35737 / TMC 1019)</name>
    <dbReference type="NCBI Taxonomy" id="561275"/>
    <lineage>
        <taxon>Bacteria</taxon>
        <taxon>Bacillati</taxon>
        <taxon>Actinomycetota</taxon>
        <taxon>Actinomycetes</taxon>
        <taxon>Mycobacteriales</taxon>
        <taxon>Mycobacteriaceae</taxon>
        <taxon>Mycobacterium</taxon>
        <taxon>Mycobacterium tuberculosis complex</taxon>
    </lineage>
</organism>
<accession>C1AM02</accession>
<sequence>MSASDGNTAELWVPTGSVTVRVPGKVNLYLAVGDRREDGYHELTTVFHAVSLVDEVTVRNADVLSLELVGEGADQLPTDERNLAWQAAELMAEHVGRAPDVSIMIDKSIPVAGGMAGGSADAAAVLVAMNSLWELNVPRRDLRMLAARLGSDVPFALHGGTALGTGRGEELATVLSRNTFHWVLAFADSGLLTSAVYNELDRLREVGDPPRLGEPGPVLAALAAGDPDQLAPLLGNEMQAAAVSLDPALARALRAGVEAGALAGIVSGSGPTCAFLCTSASSAIDVGAQLSGAGVCRTVRVATGPVPGARVVSAPTEV</sequence>
<comment type="function">
    <text evidence="2">Catalyzes the phosphorylation of the position 2 hydroxy group of 4-diphosphocytidyl-2C-methyl-D-erythritol.</text>
</comment>
<comment type="catalytic activity">
    <reaction evidence="2">
        <text>4-CDP-2-C-methyl-D-erythritol + ATP = 4-CDP-2-C-methyl-D-erythritol 2-phosphate + ADP + H(+)</text>
        <dbReference type="Rhea" id="RHEA:18437"/>
        <dbReference type="ChEBI" id="CHEBI:15378"/>
        <dbReference type="ChEBI" id="CHEBI:30616"/>
        <dbReference type="ChEBI" id="CHEBI:57823"/>
        <dbReference type="ChEBI" id="CHEBI:57919"/>
        <dbReference type="ChEBI" id="CHEBI:456216"/>
        <dbReference type="EC" id="2.7.1.148"/>
    </reaction>
</comment>
<comment type="pathway">
    <text evidence="2">Isoprenoid biosynthesis; isopentenyl diphosphate biosynthesis via DXP pathway; isopentenyl diphosphate from 1-deoxy-D-xylulose 5-phosphate: step 3/6.</text>
</comment>
<comment type="similarity">
    <text evidence="2">Belongs to the GHMP kinase family. IspE subfamily.</text>
</comment>
<comment type="sequence caution" evidence="1">
    <conflict type="erroneous initiation">
        <sequence resource="EMBL-CDS" id="BAH25331"/>
    </conflict>
    <text>Truncated N-terminus.</text>
</comment>
<reference key="1">
    <citation type="journal article" date="2009" name="Vaccine">
        <title>Whole genome sequence analysis of Mycobacterium bovis bacillus Calmette-Guerin (BCG) Tokyo 172: a comparative study of BCG vaccine substrains.</title>
        <authorList>
            <person name="Seki M."/>
            <person name="Honda I."/>
            <person name="Fujita I."/>
            <person name="Yano I."/>
            <person name="Yamamoto S."/>
            <person name="Koyama A."/>
        </authorList>
    </citation>
    <scope>NUCLEOTIDE SEQUENCE [LARGE SCALE GENOMIC DNA]</scope>
    <source>
        <strain>BCG / Tokyo 172 / ATCC 35737 / TMC 1019</strain>
    </source>
</reference>